<comment type="function">
    <text evidence="1">Antimicrobial peptide.</text>
</comment>
<comment type="subcellular location">
    <subcellularLocation>
        <location evidence="3">Secreted</location>
    </subcellularLocation>
</comment>
<comment type="tissue specificity">
    <text evidence="3">Expressed by the skin glands.</text>
</comment>
<comment type="mass spectrometry" mass="3126.9" method="MALDI" evidence="3"/>
<comment type="similarity">
    <text evidence="2">Belongs to the frog skin active peptide (FSAP) family. Dermatoxin subfamily.</text>
</comment>
<name>DRT3_PHAJA</name>
<keyword id="KW-0027">Amidation</keyword>
<keyword id="KW-0878">Amphibian defense peptide</keyword>
<keyword id="KW-0929">Antimicrobial</keyword>
<keyword id="KW-0903">Direct protein sequencing</keyword>
<keyword id="KW-0964">Secreted</keyword>
<reference key="1">
    <citation type="journal article" date="2011" name="Toxicon">
        <title>Peptidomic dissection of the skin secretion of Phasmahyla jandaia (Bokermann and Sazima, 1978) (Anura, Hylidae, Phyllomedusinae).</title>
        <authorList>
            <person name="Rates B."/>
            <person name="Silva L.P."/>
            <person name="Ireno I.C."/>
            <person name="Leite F.S."/>
            <person name="Borges M.H."/>
            <person name="Bloch C. Jr."/>
            <person name="De Lima M.E."/>
            <person name="Pimenta A.M."/>
        </authorList>
    </citation>
    <scope>PROTEIN SEQUENCE</scope>
    <scope>SUBCELLULAR LOCATION</scope>
    <scope>TISSUE SPECIFICITY</scope>
    <scope>MASS SPECTROMETRY</scope>
    <scope>AMIDATION AT GLN-32</scope>
    <source>
        <tissue>Skin secretion</tissue>
    </source>
</reference>
<dbReference type="SMR" id="P86623"/>
<dbReference type="GO" id="GO:0005576">
    <property type="term" value="C:extracellular region"/>
    <property type="evidence" value="ECO:0007669"/>
    <property type="project" value="UniProtKB-SubCell"/>
</dbReference>
<dbReference type="GO" id="GO:0006952">
    <property type="term" value="P:defense response"/>
    <property type="evidence" value="ECO:0007669"/>
    <property type="project" value="UniProtKB-KW"/>
</dbReference>
<protein>
    <recommendedName>
        <fullName evidence="4">Dermatoxin-J3</fullName>
        <shortName evidence="4">DRT-J3</shortName>
    </recommendedName>
</protein>
<organism>
    <name type="scientific">Phasmahyla jandaia</name>
    <name type="common">Jandaia leaf frog</name>
    <name type="synonym">Phyllomedusa jandaia</name>
    <dbReference type="NCBI Taxonomy" id="762504"/>
    <lineage>
        <taxon>Eukaryota</taxon>
        <taxon>Metazoa</taxon>
        <taxon>Chordata</taxon>
        <taxon>Craniata</taxon>
        <taxon>Vertebrata</taxon>
        <taxon>Euteleostomi</taxon>
        <taxon>Amphibia</taxon>
        <taxon>Batrachia</taxon>
        <taxon>Anura</taxon>
        <taxon>Neobatrachia</taxon>
        <taxon>Hyloidea</taxon>
        <taxon>Hylidae</taxon>
        <taxon>Phyllomedusinae</taxon>
        <taxon>Phasmahyla</taxon>
    </lineage>
</organism>
<evidence type="ECO:0000250" key="1">
    <source>
        <dbReference type="UniProtKB" id="P84928"/>
    </source>
</evidence>
<evidence type="ECO:0000255" key="2"/>
<evidence type="ECO:0000269" key="3">
    <source>
    </source>
</evidence>
<evidence type="ECO:0000303" key="4">
    <source>
    </source>
</evidence>
<proteinExistence type="evidence at protein level"/>
<accession>P86623</accession>
<sequence length="32" mass="3130">SLGGFLKGVGKVLAGVGKVVADQFGNLLEAGQ</sequence>
<feature type="peptide" id="PRO_0000404609" description="Dermatoxin-J3" evidence="3">
    <location>
        <begin position="1"/>
        <end position="32"/>
    </location>
</feature>
<feature type="modified residue" description="Glutamine amide" evidence="3">
    <location>
        <position position="32"/>
    </location>
</feature>
<feature type="unsure residue" description="L or I" evidence="3">
    <location>
        <position position="2"/>
    </location>
</feature>
<feature type="unsure residue" description="L or I" evidence="3">
    <location>
        <position position="6"/>
    </location>
</feature>
<feature type="unsure residue" description="K or Q" evidence="3">
    <location>
        <position position="7"/>
    </location>
</feature>
<feature type="unsure residue" description="K or Q" evidence="3">
    <location>
        <position position="11"/>
    </location>
</feature>
<feature type="unsure residue" description="L or I" evidence="3">
    <location>
        <position position="13"/>
    </location>
</feature>
<feature type="unsure residue" description="K or Q" evidence="3">
    <location>
        <position position="18"/>
    </location>
</feature>
<feature type="unsure residue" description="Q or K" evidence="3">
    <location>
        <position position="23"/>
    </location>
</feature>
<feature type="unsure residue" description="L or I" evidence="3">
    <location>
        <position position="27"/>
    </location>
</feature>
<feature type="unsure residue" description="L or I" evidence="3">
    <location>
        <position position="28"/>
    </location>
</feature>
<feature type="unsure residue" description="Q or K" evidence="3">
    <location>
        <position position="32"/>
    </location>
</feature>